<reference key="1">
    <citation type="journal article" date="2011" name="J. Bacteriol.">
        <title>Comparative genomics of 28 Salmonella enterica isolates: evidence for CRISPR-mediated adaptive sublineage evolution.</title>
        <authorList>
            <person name="Fricke W.F."/>
            <person name="Mammel M.K."/>
            <person name="McDermott P.F."/>
            <person name="Tartera C."/>
            <person name="White D.G."/>
            <person name="Leclerc J.E."/>
            <person name="Ravel J."/>
            <person name="Cebula T.A."/>
        </authorList>
    </citation>
    <scope>NUCLEOTIDE SEQUENCE [LARGE SCALE GENOMIC DNA]</scope>
    <source>
        <strain>CT_02021853</strain>
    </source>
</reference>
<evidence type="ECO:0000255" key="1">
    <source>
        <dbReference type="HAMAP-Rule" id="MF_01426"/>
    </source>
</evidence>
<sequence length="549" mass="59009">MKRVLTALAAALPFAAHAADAISGAVERQPTNWQAIIMFLIFVVFTLGITYWASKRVRSRSDYYTAGGNITGFQNGLAIAGDYMSAASFLGISALVFTSGYDGLIYSLGFLVGWPIILFLIAERLRNLGRYTFADVASYRLKQGPIRILSACGSLVVVALYLIAQMVGAGKLIELLFGLNYHIAVVLVGVLMMMYVLFGGMLATTWVQIIKAVLLLFGASFMAFMVMKHVGFSFNNLFTEAMAVHPKGTAIMSPGGLVQDPISALSLGLGLMFGTAGLPHILMRFFTVSDAREARKSVFYATGFMGYFYILTFIIGFGAIMLVGANPAYKDAAGALIGGNNMAAVHLANAVGGNLFLGFISAVAFATILAVVAGLTLAGASAVSHDLYANVFRKGATEREELKVSKITVLVLGVIAIILGVLFENQNIAFMVGLAFAIAASCNFPIILLSMYWSKLTTRGAMLGGWLGLLTAVVLMILGPTIWVQILGHEKAIFPYEYPALFSISVAFLGIWFFSATDNSAEGNREREQFRAQFIRSQTGFGVEQGRAH</sequence>
<feature type="chain" id="PRO_1000145723" description="Cation/acetate symporter ActP">
    <location>
        <begin position="1"/>
        <end position="549"/>
    </location>
</feature>
<feature type="transmembrane region" description="Helical" evidence="1">
    <location>
        <begin position="33"/>
        <end position="53"/>
    </location>
</feature>
<feature type="transmembrane region" description="Helical" evidence="1">
    <location>
        <begin position="77"/>
        <end position="97"/>
    </location>
</feature>
<feature type="transmembrane region" description="Helical" evidence="1">
    <location>
        <begin position="103"/>
        <end position="123"/>
    </location>
</feature>
<feature type="transmembrane region" description="Helical" evidence="1">
    <location>
        <begin position="148"/>
        <end position="168"/>
    </location>
</feature>
<feature type="transmembrane region" description="Helical" evidence="1">
    <location>
        <begin position="183"/>
        <end position="203"/>
    </location>
</feature>
<feature type="transmembrane region" description="Helical" evidence="1">
    <location>
        <begin position="206"/>
        <end position="226"/>
    </location>
</feature>
<feature type="transmembrane region" description="Helical" evidence="1">
    <location>
        <begin position="262"/>
        <end position="282"/>
    </location>
</feature>
<feature type="transmembrane region" description="Helical" evidence="1">
    <location>
        <begin position="303"/>
        <end position="323"/>
    </location>
</feature>
<feature type="transmembrane region" description="Helical" evidence="1">
    <location>
        <begin position="355"/>
        <end position="375"/>
    </location>
</feature>
<feature type="transmembrane region" description="Helical" evidence="1">
    <location>
        <begin position="404"/>
        <end position="424"/>
    </location>
</feature>
<feature type="transmembrane region" description="Helical" evidence="1">
    <location>
        <begin position="428"/>
        <end position="448"/>
    </location>
</feature>
<feature type="transmembrane region" description="Helical" evidence="1">
    <location>
        <begin position="464"/>
        <end position="484"/>
    </location>
</feature>
<feature type="transmembrane region" description="Helical" evidence="1">
    <location>
        <begin position="493"/>
        <end position="513"/>
    </location>
</feature>
<keyword id="KW-0997">Cell inner membrane</keyword>
<keyword id="KW-1003">Cell membrane</keyword>
<keyword id="KW-0406">Ion transport</keyword>
<keyword id="KW-0472">Membrane</keyword>
<keyword id="KW-0915">Sodium</keyword>
<keyword id="KW-0739">Sodium transport</keyword>
<keyword id="KW-0769">Symport</keyword>
<keyword id="KW-0812">Transmembrane</keyword>
<keyword id="KW-1133">Transmembrane helix</keyword>
<keyword id="KW-0813">Transport</keyword>
<dbReference type="EMBL" id="CP001144">
    <property type="protein sequence ID" value="ACH74667.1"/>
    <property type="molecule type" value="Genomic_DNA"/>
</dbReference>
<dbReference type="RefSeq" id="WP_000832535.1">
    <property type="nucleotide sequence ID" value="NC_011205.1"/>
</dbReference>
<dbReference type="SMR" id="B5FRF0"/>
<dbReference type="KEGG" id="sed:SeD_A4668"/>
<dbReference type="HOGENOM" id="CLU_018808_8_3_6"/>
<dbReference type="Proteomes" id="UP000008322">
    <property type="component" value="Chromosome"/>
</dbReference>
<dbReference type="GO" id="GO:0005886">
    <property type="term" value="C:plasma membrane"/>
    <property type="evidence" value="ECO:0007669"/>
    <property type="project" value="UniProtKB-SubCell"/>
</dbReference>
<dbReference type="GO" id="GO:0015123">
    <property type="term" value="F:acetate transmembrane transporter activity"/>
    <property type="evidence" value="ECO:0007669"/>
    <property type="project" value="UniProtKB-UniRule"/>
</dbReference>
<dbReference type="GO" id="GO:0043879">
    <property type="term" value="F:glycolate transmembrane transporter activity"/>
    <property type="evidence" value="ECO:0007669"/>
    <property type="project" value="InterPro"/>
</dbReference>
<dbReference type="GO" id="GO:0015293">
    <property type="term" value="F:symporter activity"/>
    <property type="evidence" value="ECO:0007669"/>
    <property type="project" value="UniProtKB-KW"/>
</dbReference>
<dbReference type="GO" id="GO:0006847">
    <property type="term" value="P:plasma membrane acetate transport"/>
    <property type="evidence" value="ECO:0007669"/>
    <property type="project" value="TreeGrafter"/>
</dbReference>
<dbReference type="GO" id="GO:0006814">
    <property type="term" value="P:sodium ion transport"/>
    <property type="evidence" value="ECO:0007669"/>
    <property type="project" value="UniProtKB-KW"/>
</dbReference>
<dbReference type="CDD" id="cd11480">
    <property type="entry name" value="SLC5sbd_u4"/>
    <property type="match status" value="1"/>
</dbReference>
<dbReference type="FunFam" id="1.20.1730.10:FF:000001">
    <property type="entry name" value="Cation/acetate symporter ActP"/>
    <property type="match status" value="1"/>
</dbReference>
<dbReference type="Gene3D" id="1.20.1730.10">
    <property type="entry name" value="Sodium/glucose cotransporter"/>
    <property type="match status" value="1"/>
</dbReference>
<dbReference type="HAMAP" id="MF_01426">
    <property type="entry name" value="Acet_symport_ActP"/>
    <property type="match status" value="1"/>
</dbReference>
<dbReference type="InterPro" id="IPR014083">
    <property type="entry name" value="Cation/Ac_symporter_ActP"/>
</dbReference>
<dbReference type="InterPro" id="IPR038377">
    <property type="entry name" value="Na/Glc_symporter_sf"/>
</dbReference>
<dbReference type="InterPro" id="IPR001734">
    <property type="entry name" value="Na/solute_symporter"/>
</dbReference>
<dbReference type="InterPro" id="IPR018212">
    <property type="entry name" value="Na/solute_symporter_CS"/>
</dbReference>
<dbReference type="InterPro" id="IPR050277">
    <property type="entry name" value="Sodium:Solute_Symporter"/>
</dbReference>
<dbReference type="NCBIfam" id="NF006903">
    <property type="entry name" value="PRK09395.1"/>
    <property type="match status" value="1"/>
</dbReference>
<dbReference type="NCBIfam" id="NF009135">
    <property type="entry name" value="PRK12488.1"/>
    <property type="match status" value="1"/>
</dbReference>
<dbReference type="NCBIfam" id="TIGR00813">
    <property type="entry name" value="sss"/>
    <property type="match status" value="1"/>
</dbReference>
<dbReference type="NCBIfam" id="TIGR02711">
    <property type="entry name" value="symport_actP"/>
    <property type="match status" value="1"/>
</dbReference>
<dbReference type="PANTHER" id="PTHR48086:SF6">
    <property type="entry name" value="CATION_ACETATE SYMPORTER ACTP"/>
    <property type="match status" value="1"/>
</dbReference>
<dbReference type="PANTHER" id="PTHR48086">
    <property type="entry name" value="SODIUM/PROLINE SYMPORTER-RELATED"/>
    <property type="match status" value="1"/>
</dbReference>
<dbReference type="Pfam" id="PF00474">
    <property type="entry name" value="SSF"/>
    <property type="match status" value="1"/>
</dbReference>
<dbReference type="PROSITE" id="PS00456">
    <property type="entry name" value="NA_SOLUT_SYMP_1"/>
    <property type="match status" value="1"/>
</dbReference>
<dbReference type="PROSITE" id="PS00457">
    <property type="entry name" value="NA_SOLUT_SYMP_2"/>
    <property type="match status" value="1"/>
</dbReference>
<dbReference type="PROSITE" id="PS50283">
    <property type="entry name" value="NA_SOLUT_SYMP_3"/>
    <property type="match status" value="1"/>
</dbReference>
<proteinExistence type="inferred from homology"/>
<organism>
    <name type="scientific">Salmonella dublin (strain CT_02021853)</name>
    <dbReference type="NCBI Taxonomy" id="439851"/>
    <lineage>
        <taxon>Bacteria</taxon>
        <taxon>Pseudomonadati</taxon>
        <taxon>Pseudomonadota</taxon>
        <taxon>Gammaproteobacteria</taxon>
        <taxon>Enterobacterales</taxon>
        <taxon>Enterobacteriaceae</taxon>
        <taxon>Salmonella</taxon>
    </lineage>
</organism>
<name>ACTP_SALDC</name>
<comment type="function">
    <text evidence="1">Transports acetate.</text>
</comment>
<comment type="subcellular location">
    <subcellularLocation>
        <location evidence="1">Cell inner membrane</location>
        <topology evidence="1">Multi-pass membrane protein</topology>
    </subcellularLocation>
</comment>
<comment type="similarity">
    <text evidence="1">Belongs to the sodium:solute symporter (SSF) (TC 2.A.21) family.</text>
</comment>
<gene>
    <name evidence="1" type="primary">actP</name>
    <name type="ordered locus">SeD_A4668</name>
</gene>
<protein>
    <recommendedName>
        <fullName evidence="1">Cation/acetate symporter ActP</fullName>
    </recommendedName>
    <alternativeName>
        <fullName evidence="1">Acetate permease</fullName>
    </alternativeName>
    <alternativeName>
        <fullName evidence="1">Acetate transporter ActP</fullName>
    </alternativeName>
</protein>
<accession>B5FRF0</accession>